<sequence>MLLDAIEARIIGCLLEKEVTTPDQYPLSLNALTLACNQKSSRAPVMDLSETQVQAGIDELTKKRLVSEQSGFGSRVVKYKHRFCNTEFSDLQLSSAQVAVLSLLLLRGPQTPGELRTRAGRQHDFKDIAEVEATLTALASRETPLVVQLPREPGKRESRFSLTIVEATTGMTTHSVASQVDERDDSRIAALEERVAQLEARLDALLLQTH</sequence>
<reference key="1">
    <citation type="submission" date="2006-12" db="EMBL/GenBank/DDBJ databases">
        <title>Complete sequence of Shewanella amazonensis SB2B.</title>
        <authorList>
            <consortium name="US DOE Joint Genome Institute"/>
            <person name="Copeland A."/>
            <person name="Lucas S."/>
            <person name="Lapidus A."/>
            <person name="Barry K."/>
            <person name="Detter J.C."/>
            <person name="Glavina del Rio T."/>
            <person name="Hammon N."/>
            <person name="Israni S."/>
            <person name="Dalin E."/>
            <person name="Tice H."/>
            <person name="Pitluck S."/>
            <person name="Munk A.C."/>
            <person name="Brettin T."/>
            <person name="Bruce D."/>
            <person name="Han C."/>
            <person name="Tapia R."/>
            <person name="Gilna P."/>
            <person name="Schmutz J."/>
            <person name="Larimer F."/>
            <person name="Land M."/>
            <person name="Hauser L."/>
            <person name="Kyrpides N."/>
            <person name="Mikhailova N."/>
            <person name="Fredrickson J."/>
            <person name="Richardson P."/>
        </authorList>
    </citation>
    <scope>NUCLEOTIDE SEQUENCE [LARGE SCALE GENOMIC DNA]</scope>
    <source>
        <strain>ATCC BAA-1098 / SB2B</strain>
    </source>
</reference>
<feature type="chain" id="PRO_0000309423" description="UPF0502 protein Sama_1967">
    <location>
        <begin position="1"/>
        <end position="210"/>
    </location>
</feature>
<proteinExistence type="inferred from homology"/>
<comment type="similarity">
    <text evidence="1">Belongs to the UPF0502 family.</text>
</comment>
<gene>
    <name type="ordered locus">Sama_1967</name>
</gene>
<organism>
    <name type="scientific">Shewanella amazonensis (strain ATCC BAA-1098 / SB2B)</name>
    <dbReference type="NCBI Taxonomy" id="326297"/>
    <lineage>
        <taxon>Bacteria</taxon>
        <taxon>Pseudomonadati</taxon>
        <taxon>Pseudomonadota</taxon>
        <taxon>Gammaproteobacteria</taxon>
        <taxon>Alteromonadales</taxon>
        <taxon>Shewanellaceae</taxon>
        <taxon>Shewanella</taxon>
    </lineage>
</organism>
<accession>A1S716</accession>
<protein>
    <recommendedName>
        <fullName evidence="1">UPF0502 protein Sama_1967</fullName>
    </recommendedName>
</protein>
<name>Y1967_SHEAM</name>
<dbReference type="EMBL" id="CP000507">
    <property type="protein sequence ID" value="ABM00173.1"/>
    <property type="molecule type" value="Genomic_DNA"/>
</dbReference>
<dbReference type="RefSeq" id="WP_011760080.1">
    <property type="nucleotide sequence ID" value="NC_008700.1"/>
</dbReference>
<dbReference type="SMR" id="A1S716"/>
<dbReference type="STRING" id="326297.Sama_1967"/>
<dbReference type="KEGG" id="saz:Sama_1967"/>
<dbReference type="eggNOG" id="COG3132">
    <property type="taxonomic scope" value="Bacteria"/>
</dbReference>
<dbReference type="HOGENOM" id="CLU_057831_2_0_6"/>
<dbReference type="OrthoDB" id="9784785at2"/>
<dbReference type="Proteomes" id="UP000009175">
    <property type="component" value="Chromosome"/>
</dbReference>
<dbReference type="Gene3D" id="1.10.10.10">
    <property type="entry name" value="Winged helix-like DNA-binding domain superfamily/Winged helix DNA-binding domain"/>
    <property type="match status" value="2"/>
</dbReference>
<dbReference type="HAMAP" id="MF_01584">
    <property type="entry name" value="UPF0502"/>
    <property type="match status" value="1"/>
</dbReference>
<dbReference type="InterPro" id="IPR007432">
    <property type="entry name" value="DUF480"/>
</dbReference>
<dbReference type="InterPro" id="IPR036388">
    <property type="entry name" value="WH-like_DNA-bd_sf"/>
</dbReference>
<dbReference type="InterPro" id="IPR036390">
    <property type="entry name" value="WH_DNA-bd_sf"/>
</dbReference>
<dbReference type="PANTHER" id="PTHR38768">
    <property type="entry name" value="UPF0502 PROTEIN YCEH"/>
    <property type="match status" value="1"/>
</dbReference>
<dbReference type="PANTHER" id="PTHR38768:SF1">
    <property type="entry name" value="UPF0502 PROTEIN YCEH"/>
    <property type="match status" value="1"/>
</dbReference>
<dbReference type="Pfam" id="PF04337">
    <property type="entry name" value="DUF480"/>
    <property type="match status" value="1"/>
</dbReference>
<dbReference type="SUPFAM" id="SSF46785">
    <property type="entry name" value="Winged helix' DNA-binding domain"/>
    <property type="match status" value="2"/>
</dbReference>
<keyword id="KW-1185">Reference proteome</keyword>
<evidence type="ECO:0000255" key="1">
    <source>
        <dbReference type="HAMAP-Rule" id="MF_01584"/>
    </source>
</evidence>